<sequence length="753" mass="81533">MTFSFTATVLGSPRIGPNRELKKAVESYWAGRLDAEGLDALARDLRRRTWTSLRDAGLDSVPVNTFSYYDHVLDTAAMLGALPDRVAGIESDLDRYFAAARGNDTVAPLEMTRWFDTNYHYLVPEISPTTTFALDPSKVLRELEEARALDIPARPVVVGPVTFLLLSKAVGSDAPLLDRLDELVPLYADLLGRLAGAGADWVQIDEPALVADRNPKEIAAAKRAYDRLSGLELRPAILVASYFGSLGDALPAIASTGVEGIAIDLVAGSDTLATVPDLTRKHVVAGVVDGRNIWRTDLDAALASLGTLLGSTGSLAVSTSCSLLHVPYTLDAETGIDKALRSWLAFGTEKVREVVTLGTALTSGRESVDDEFALARAAASTRNTDRRLHDATVRARLDALTASDPGRSPAAERREAQSALSLPVLPTTTIGSYPQTTQIRVARAARRKGEIDEAEYLKRMRAEVADVVALQEKLDLDVLVHGEPERNDMVQYFAEQLDGFFATDNGWVQSYGSRCVRPPILYGDVRRSNPMTVEWITYAQSLTQRPVKGMLTGPVTILAWSFVRDDQPLADSANQVALAIRDETVDLQGAGIRIVQVDEPALRELLPLRAADQPGYLDWSVGAFRLATSGVSDSTQIHTHLCYSEFGEVIEAIARLDADVTSIEAARSHMEVLDDLSAVGFDLGVGPGVYDIHSPRVPGVEEIAASLREALKAVPVERLWVNPDCGLKTRGPAEVEASLRNLVDAAKLVRAEL</sequence>
<organism>
    <name type="scientific">Rhodococcus jostii (strain RHA1)</name>
    <dbReference type="NCBI Taxonomy" id="101510"/>
    <lineage>
        <taxon>Bacteria</taxon>
        <taxon>Bacillati</taxon>
        <taxon>Actinomycetota</taxon>
        <taxon>Actinomycetes</taxon>
        <taxon>Mycobacteriales</taxon>
        <taxon>Nocardiaceae</taxon>
        <taxon>Rhodococcus</taxon>
    </lineage>
</organism>
<dbReference type="EC" id="2.1.1.14" evidence="1"/>
<dbReference type="EMBL" id="CP000431">
    <property type="protein sequence ID" value="ABG96709.1"/>
    <property type="molecule type" value="Genomic_DNA"/>
</dbReference>
<dbReference type="RefSeq" id="WP_011597213.1">
    <property type="nucleotide sequence ID" value="NC_008268.1"/>
</dbReference>
<dbReference type="SMR" id="Q0S6X7"/>
<dbReference type="KEGG" id="rha:RHA1_ro04928"/>
<dbReference type="PATRIC" id="fig|101510.16.peg.4976"/>
<dbReference type="eggNOG" id="COG0620">
    <property type="taxonomic scope" value="Bacteria"/>
</dbReference>
<dbReference type="HOGENOM" id="CLU_013175_0_0_11"/>
<dbReference type="OrthoDB" id="244285at2"/>
<dbReference type="UniPathway" id="UPA00051">
    <property type="reaction ID" value="UER00082"/>
</dbReference>
<dbReference type="Proteomes" id="UP000008710">
    <property type="component" value="Chromosome"/>
</dbReference>
<dbReference type="GO" id="GO:0003871">
    <property type="term" value="F:5-methyltetrahydropteroyltriglutamate-homocysteine S-methyltransferase activity"/>
    <property type="evidence" value="ECO:0007669"/>
    <property type="project" value="UniProtKB-UniRule"/>
</dbReference>
<dbReference type="GO" id="GO:0008270">
    <property type="term" value="F:zinc ion binding"/>
    <property type="evidence" value="ECO:0007669"/>
    <property type="project" value="InterPro"/>
</dbReference>
<dbReference type="GO" id="GO:0009086">
    <property type="term" value="P:methionine biosynthetic process"/>
    <property type="evidence" value="ECO:0007669"/>
    <property type="project" value="UniProtKB-UniRule"/>
</dbReference>
<dbReference type="GO" id="GO:0032259">
    <property type="term" value="P:methylation"/>
    <property type="evidence" value="ECO:0007669"/>
    <property type="project" value="UniProtKB-KW"/>
</dbReference>
<dbReference type="CDD" id="cd03311">
    <property type="entry name" value="CIMS_C_terminal_like"/>
    <property type="match status" value="1"/>
</dbReference>
<dbReference type="CDD" id="cd03312">
    <property type="entry name" value="CIMS_N_terminal_like"/>
    <property type="match status" value="1"/>
</dbReference>
<dbReference type="Gene3D" id="3.20.20.210">
    <property type="match status" value="2"/>
</dbReference>
<dbReference type="HAMAP" id="MF_00172">
    <property type="entry name" value="Meth_synth"/>
    <property type="match status" value="1"/>
</dbReference>
<dbReference type="InterPro" id="IPR013215">
    <property type="entry name" value="Cbl-indep_Met_Synth_N"/>
</dbReference>
<dbReference type="InterPro" id="IPR006276">
    <property type="entry name" value="Cobalamin-indep_Met_synthase"/>
</dbReference>
<dbReference type="InterPro" id="IPR002629">
    <property type="entry name" value="Met_Synth_C/arc"/>
</dbReference>
<dbReference type="InterPro" id="IPR038071">
    <property type="entry name" value="UROD/MetE-like_sf"/>
</dbReference>
<dbReference type="NCBIfam" id="TIGR01371">
    <property type="entry name" value="met_syn_B12ind"/>
    <property type="match status" value="1"/>
</dbReference>
<dbReference type="NCBIfam" id="NF003556">
    <property type="entry name" value="PRK05222.1"/>
    <property type="match status" value="1"/>
</dbReference>
<dbReference type="PANTHER" id="PTHR30519">
    <property type="entry name" value="5-METHYLTETRAHYDROPTEROYLTRIGLUTAMATE--HOMOCYSTEINE METHYLTRANSFERASE"/>
    <property type="match status" value="1"/>
</dbReference>
<dbReference type="Pfam" id="PF08267">
    <property type="entry name" value="Meth_synt_1"/>
    <property type="match status" value="1"/>
</dbReference>
<dbReference type="Pfam" id="PF01717">
    <property type="entry name" value="Meth_synt_2"/>
    <property type="match status" value="1"/>
</dbReference>
<dbReference type="PIRSF" id="PIRSF000382">
    <property type="entry name" value="MeTrfase_B12_ind"/>
    <property type="match status" value="1"/>
</dbReference>
<dbReference type="SUPFAM" id="SSF51726">
    <property type="entry name" value="UROD/MetE-like"/>
    <property type="match status" value="2"/>
</dbReference>
<protein>
    <recommendedName>
        <fullName evidence="1">5-methyltetrahydropteroyltriglutamate--homocysteine methyltransferase</fullName>
        <ecNumber evidence="1">2.1.1.14</ecNumber>
    </recommendedName>
    <alternativeName>
        <fullName evidence="1">Cobalamin-independent methionine synthase</fullName>
    </alternativeName>
    <alternativeName>
        <fullName evidence="1">Methionine synthase, vitamin-B12 independent isozyme</fullName>
    </alternativeName>
</protein>
<evidence type="ECO:0000255" key="1">
    <source>
        <dbReference type="HAMAP-Rule" id="MF_00172"/>
    </source>
</evidence>
<keyword id="KW-0028">Amino-acid biosynthesis</keyword>
<keyword id="KW-0479">Metal-binding</keyword>
<keyword id="KW-0486">Methionine biosynthesis</keyword>
<keyword id="KW-0489">Methyltransferase</keyword>
<keyword id="KW-0677">Repeat</keyword>
<keyword id="KW-0808">Transferase</keyword>
<keyword id="KW-0862">Zinc</keyword>
<gene>
    <name evidence="1" type="primary">metE</name>
    <name type="ordered locus">RHA1_ro04928</name>
</gene>
<reference key="1">
    <citation type="journal article" date="2006" name="Proc. Natl. Acad. Sci. U.S.A.">
        <title>The complete genome of Rhodococcus sp. RHA1 provides insights into a catabolic powerhouse.</title>
        <authorList>
            <person name="McLeod M.P."/>
            <person name="Warren R.L."/>
            <person name="Hsiao W.W.L."/>
            <person name="Araki N."/>
            <person name="Myhre M."/>
            <person name="Fernandes C."/>
            <person name="Miyazawa D."/>
            <person name="Wong W."/>
            <person name="Lillquist A.L."/>
            <person name="Wang D."/>
            <person name="Dosanjh M."/>
            <person name="Hara H."/>
            <person name="Petrescu A."/>
            <person name="Morin R.D."/>
            <person name="Yang G."/>
            <person name="Stott J.M."/>
            <person name="Schein J.E."/>
            <person name="Shin H."/>
            <person name="Smailus D."/>
            <person name="Siddiqui A.S."/>
            <person name="Marra M.A."/>
            <person name="Jones S.J.M."/>
            <person name="Holt R."/>
            <person name="Brinkman F.S.L."/>
            <person name="Miyauchi K."/>
            <person name="Fukuda M."/>
            <person name="Davies J.E."/>
            <person name="Mohn W.W."/>
            <person name="Eltis L.D."/>
        </authorList>
    </citation>
    <scope>NUCLEOTIDE SEQUENCE [LARGE SCALE GENOMIC DNA]</scope>
    <source>
        <strain>RHA1</strain>
    </source>
</reference>
<accession>Q0S6X7</accession>
<comment type="function">
    <text evidence="1">Catalyzes the transfer of a methyl group from 5-methyltetrahydrofolate to homocysteine resulting in methionine formation.</text>
</comment>
<comment type="catalytic activity">
    <reaction evidence="1">
        <text>5-methyltetrahydropteroyltri-L-glutamate + L-homocysteine = tetrahydropteroyltri-L-glutamate + L-methionine</text>
        <dbReference type="Rhea" id="RHEA:21196"/>
        <dbReference type="ChEBI" id="CHEBI:57844"/>
        <dbReference type="ChEBI" id="CHEBI:58140"/>
        <dbReference type="ChEBI" id="CHEBI:58199"/>
        <dbReference type="ChEBI" id="CHEBI:58207"/>
        <dbReference type="EC" id="2.1.1.14"/>
    </reaction>
</comment>
<comment type="cofactor">
    <cofactor evidence="1">
        <name>Zn(2+)</name>
        <dbReference type="ChEBI" id="CHEBI:29105"/>
    </cofactor>
    <text evidence="1">Binds 1 zinc ion per subunit.</text>
</comment>
<comment type="pathway">
    <text evidence="1">Amino-acid biosynthesis; L-methionine biosynthesis via de novo pathway; L-methionine from L-homocysteine (MetE route): step 1/1.</text>
</comment>
<comment type="similarity">
    <text evidence="1">Belongs to the vitamin-B12 independent methionine synthase family.</text>
</comment>
<name>METE_RHOJR</name>
<proteinExistence type="inferred from homology"/>
<feature type="chain" id="PRO_1000097836" description="5-methyltetrahydropteroyltriglutamate--homocysteine methyltransferase">
    <location>
        <begin position="1"/>
        <end position="753"/>
    </location>
</feature>
<feature type="active site" description="Proton donor" evidence="1">
    <location>
        <position position="693"/>
    </location>
</feature>
<feature type="binding site" evidence="1">
    <location>
        <begin position="19"/>
        <end position="22"/>
    </location>
    <ligand>
        <name>5-methyltetrahydropteroyltri-L-glutamate</name>
        <dbReference type="ChEBI" id="CHEBI:58207"/>
    </ligand>
</feature>
<feature type="binding site" evidence="1">
    <location>
        <position position="113"/>
    </location>
    <ligand>
        <name>5-methyltetrahydropteroyltri-L-glutamate</name>
        <dbReference type="ChEBI" id="CHEBI:58207"/>
    </ligand>
</feature>
<feature type="binding site" evidence="1">
    <location>
        <begin position="430"/>
        <end position="432"/>
    </location>
    <ligand>
        <name>L-homocysteine</name>
        <dbReference type="ChEBI" id="CHEBI:58199"/>
    </ligand>
</feature>
<feature type="binding site" evidence="1">
    <location>
        <begin position="430"/>
        <end position="432"/>
    </location>
    <ligand>
        <name>L-methionine</name>
        <dbReference type="ChEBI" id="CHEBI:57844"/>
    </ligand>
</feature>
<feature type="binding site" evidence="1">
    <location>
        <position position="483"/>
    </location>
    <ligand>
        <name>L-homocysteine</name>
        <dbReference type="ChEBI" id="CHEBI:58199"/>
    </ligand>
</feature>
<feature type="binding site" evidence="1">
    <location>
        <position position="483"/>
    </location>
    <ligand>
        <name>L-methionine</name>
        <dbReference type="ChEBI" id="CHEBI:57844"/>
    </ligand>
</feature>
<feature type="binding site" evidence="1">
    <location>
        <begin position="514"/>
        <end position="515"/>
    </location>
    <ligand>
        <name>5-methyltetrahydropteroyltri-L-glutamate</name>
        <dbReference type="ChEBI" id="CHEBI:58207"/>
    </ligand>
</feature>
<feature type="binding site" evidence="1">
    <location>
        <position position="560"/>
    </location>
    <ligand>
        <name>5-methyltetrahydropteroyltri-L-glutamate</name>
        <dbReference type="ChEBI" id="CHEBI:58207"/>
    </ligand>
</feature>
<feature type="binding site" evidence="1">
    <location>
        <position position="598"/>
    </location>
    <ligand>
        <name>L-homocysteine</name>
        <dbReference type="ChEBI" id="CHEBI:58199"/>
    </ligand>
</feature>
<feature type="binding site" evidence="1">
    <location>
        <position position="598"/>
    </location>
    <ligand>
        <name>L-methionine</name>
        <dbReference type="ChEBI" id="CHEBI:57844"/>
    </ligand>
</feature>
<feature type="binding site" evidence="1">
    <location>
        <position position="604"/>
    </location>
    <ligand>
        <name>5-methyltetrahydropteroyltri-L-glutamate</name>
        <dbReference type="ChEBI" id="CHEBI:58207"/>
    </ligand>
</feature>
<feature type="binding site" evidence="1">
    <location>
        <position position="640"/>
    </location>
    <ligand>
        <name>Zn(2+)</name>
        <dbReference type="ChEBI" id="CHEBI:29105"/>
        <note>catalytic</note>
    </ligand>
</feature>
<feature type="binding site" evidence="1">
    <location>
        <position position="642"/>
    </location>
    <ligand>
        <name>Zn(2+)</name>
        <dbReference type="ChEBI" id="CHEBI:29105"/>
        <note>catalytic</note>
    </ligand>
</feature>
<feature type="binding site" evidence="1">
    <location>
        <position position="664"/>
    </location>
    <ligand>
        <name>Zn(2+)</name>
        <dbReference type="ChEBI" id="CHEBI:29105"/>
        <note>catalytic</note>
    </ligand>
</feature>
<feature type="binding site" evidence="1">
    <location>
        <position position="725"/>
    </location>
    <ligand>
        <name>Zn(2+)</name>
        <dbReference type="ChEBI" id="CHEBI:29105"/>
        <note>catalytic</note>
    </ligand>
</feature>